<name>PIMT_CAUSK</name>
<comment type="function">
    <text evidence="1">Catalyzes the methyl esterification of L-isoaspartyl residues in peptides and proteins that result from spontaneous decomposition of normal L-aspartyl and L-asparaginyl residues. It plays a role in the repair and/or degradation of damaged proteins.</text>
</comment>
<comment type="catalytic activity">
    <reaction evidence="1">
        <text>[protein]-L-isoaspartate + S-adenosyl-L-methionine = [protein]-L-isoaspartate alpha-methyl ester + S-adenosyl-L-homocysteine</text>
        <dbReference type="Rhea" id="RHEA:12705"/>
        <dbReference type="Rhea" id="RHEA-COMP:12143"/>
        <dbReference type="Rhea" id="RHEA-COMP:12144"/>
        <dbReference type="ChEBI" id="CHEBI:57856"/>
        <dbReference type="ChEBI" id="CHEBI:59789"/>
        <dbReference type="ChEBI" id="CHEBI:90596"/>
        <dbReference type="ChEBI" id="CHEBI:90598"/>
        <dbReference type="EC" id="2.1.1.77"/>
    </reaction>
</comment>
<comment type="subcellular location">
    <subcellularLocation>
        <location evidence="1">Cytoplasm</location>
    </subcellularLocation>
</comment>
<comment type="similarity">
    <text evidence="1">Belongs to the methyltransferase superfamily. L-isoaspartyl/D-aspartyl protein methyltransferase family.</text>
</comment>
<organism>
    <name type="scientific">Caulobacter sp. (strain K31)</name>
    <dbReference type="NCBI Taxonomy" id="366602"/>
    <lineage>
        <taxon>Bacteria</taxon>
        <taxon>Pseudomonadati</taxon>
        <taxon>Pseudomonadota</taxon>
        <taxon>Alphaproteobacteria</taxon>
        <taxon>Caulobacterales</taxon>
        <taxon>Caulobacteraceae</taxon>
        <taxon>Caulobacter</taxon>
    </lineage>
</organism>
<reference key="1">
    <citation type="submission" date="2008-01" db="EMBL/GenBank/DDBJ databases">
        <title>Complete sequence of chromosome of Caulobacter sp. K31.</title>
        <authorList>
            <consortium name="US DOE Joint Genome Institute"/>
            <person name="Copeland A."/>
            <person name="Lucas S."/>
            <person name="Lapidus A."/>
            <person name="Barry K."/>
            <person name="Glavina del Rio T."/>
            <person name="Dalin E."/>
            <person name="Tice H."/>
            <person name="Pitluck S."/>
            <person name="Bruce D."/>
            <person name="Goodwin L."/>
            <person name="Thompson L.S."/>
            <person name="Brettin T."/>
            <person name="Detter J.C."/>
            <person name="Han C."/>
            <person name="Schmutz J."/>
            <person name="Larimer F."/>
            <person name="Land M."/>
            <person name="Hauser L."/>
            <person name="Kyrpides N."/>
            <person name="Kim E."/>
            <person name="Stephens C."/>
            <person name="Richardson P."/>
        </authorList>
    </citation>
    <scope>NUCLEOTIDE SEQUENCE [LARGE SCALE GENOMIC DNA]</scope>
    <source>
        <strain>K31</strain>
    </source>
</reference>
<sequence length="218" mass="23672">MAQAKADTPEAGLKALMAALRKQGVTDPAVLTAIEKTPRDLFTPDLFKERSWEDSALPIACGQTISQPFIVGLMTQALTLEPRCRVLEIGTGSGYQTAVLSRVSRLVYTIERYRTLMKEAEARFAVLGLTNVITKFGDGWEGWPKQAPFDRILVTAAAQDEPEALLSQLKPQGVLVAPVGKGPVQSLRRYAGDGKGGFTVEVLCDVRFVPILDGVARE</sequence>
<protein>
    <recommendedName>
        <fullName evidence="1">Protein-L-isoaspartate O-methyltransferase</fullName>
        <ecNumber evidence="1">2.1.1.77</ecNumber>
    </recommendedName>
    <alternativeName>
        <fullName evidence="1">L-isoaspartyl protein carboxyl methyltransferase</fullName>
    </alternativeName>
    <alternativeName>
        <fullName evidence="1">Protein L-isoaspartyl methyltransferase</fullName>
    </alternativeName>
    <alternativeName>
        <fullName evidence="1">Protein-beta-aspartate methyltransferase</fullName>
        <shortName evidence="1">PIMT</shortName>
    </alternativeName>
</protein>
<evidence type="ECO:0000255" key="1">
    <source>
        <dbReference type="HAMAP-Rule" id="MF_00090"/>
    </source>
</evidence>
<keyword id="KW-0963">Cytoplasm</keyword>
<keyword id="KW-0489">Methyltransferase</keyword>
<keyword id="KW-0949">S-adenosyl-L-methionine</keyword>
<keyword id="KW-0808">Transferase</keyword>
<dbReference type="EC" id="2.1.1.77" evidence="1"/>
<dbReference type="EMBL" id="CP000927">
    <property type="protein sequence ID" value="ABZ72240.1"/>
    <property type="molecule type" value="Genomic_DNA"/>
</dbReference>
<dbReference type="SMR" id="B0T1Q1"/>
<dbReference type="STRING" id="366602.Caul_3113"/>
<dbReference type="KEGG" id="cak:Caul_3113"/>
<dbReference type="eggNOG" id="COG2518">
    <property type="taxonomic scope" value="Bacteria"/>
</dbReference>
<dbReference type="HOGENOM" id="CLU_055432_2_0_5"/>
<dbReference type="OrthoDB" id="9810066at2"/>
<dbReference type="GO" id="GO:0005737">
    <property type="term" value="C:cytoplasm"/>
    <property type="evidence" value="ECO:0007669"/>
    <property type="project" value="UniProtKB-SubCell"/>
</dbReference>
<dbReference type="GO" id="GO:0004719">
    <property type="term" value="F:protein-L-isoaspartate (D-aspartate) O-methyltransferase activity"/>
    <property type="evidence" value="ECO:0007669"/>
    <property type="project" value="UniProtKB-UniRule"/>
</dbReference>
<dbReference type="GO" id="GO:0032259">
    <property type="term" value="P:methylation"/>
    <property type="evidence" value="ECO:0007669"/>
    <property type="project" value="UniProtKB-KW"/>
</dbReference>
<dbReference type="GO" id="GO:0036211">
    <property type="term" value="P:protein modification process"/>
    <property type="evidence" value="ECO:0007669"/>
    <property type="project" value="UniProtKB-UniRule"/>
</dbReference>
<dbReference type="GO" id="GO:0030091">
    <property type="term" value="P:protein repair"/>
    <property type="evidence" value="ECO:0007669"/>
    <property type="project" value="UniProtKB-UniRule"/>
</dbReference>
<dbReference type="CDD" id="cd02440">
    <property type="entry name" value="AdoMet_MTases"/>
    <property type="match status" value="1"/>
</dbReference>
<dbReference type="FunFam" id="3.40.50.150:FF:000010">
    <property type="entry name" value="Protein-L-isoaspartate O-methyltransferase"/>
    <property type="match status" value="1"/>
</dbReference>
<dbReference type="Gene3D" id="3.40.50.150">
    <property type="entry name" value="Vaccinia Virus protein VP39"/>
    <property type="match status" value="1"/>
</dbReference>
<dbReference type="HAMAP" id="MF_00090">
    <property type="entry name" value="PIMT"/>
    <property type="match status" value="1"/>
</dbReference>
<dbReference type="InterPro" id="IPR000682">
    <property type="entry name" value="PCMT"/>
</dbReference>
<dbReference type="InterPro" id="IPR029063">
    <property type="entry name" value="SAM-dependent_MTases_sf"/>
</dbReference>
<dbReference type="NCBIfam" id="TIGR00080">
    <property type="entry name" value="pimt"/>
    <property type="match status" value="1"/>
</dbReference>
<dbReference type="NCBIfam" id="NF001453">
    <property type="entry name" value="PRK00312.1"/>
    <property type="match status" value="1"/>
</dbReference>
<dbReference type="PANTHER" id="PTHR11579">
    <property type="entry name" value="PROTEIN-L-ISOASPARTATE O-METHYLTRANSFERASE"/>
    <property type="match status" value="1"/>
</dbReference>
<dbReference type="PANTHER" id="PTHR11579:SF0">
    <property type="entry name" value="PROTEIN-L-ISOASPARTATE(D-ASPARTATE) O-METHYLTRANSFERASE"/>
    <property type="match status" value="1"/>
</dbReference>
<dbReference type="Pfam" id="PF01135">
    <property type="entry name" value="PCMT"/>
    <property type="match status" value="1"/>
</dbReference>
<dbReference type="SUPFAM" id="SSF53335">
    <property type="entry name" value="S-adenosyl-L-methionine-dependent methyltransferases"/>
    <property type="match status" value="1"/>
</dbReference>
<dbReference type="PROSITE" id="PS01279">
    <property type="entry name" value="PCMT"/>
    <property type="match status" value="1"/>
</dbReference>
<accession>B0T1Q1</accession>
<gene>
    <name evidence="1" type="primary">pcm</name>
    <name type="ordered locus">Caul_3113</name>
</gene>
<feature type="chain" id="PRO_0000351841" description="Protein-L-isoaspartate O-methyltransferase">
    <location>
        <begin position="1"/>
        <end position="218"/>
    </location>
</feature>
<feature type="active site" evidence="1">
    <location>
        <position position="66"/>
    </location>
</feature>
<proteinExistence type="inferred from homology"/>